<reference evidence="8" key="1">
    <citation type="submission" date="2004-05" db="EMBL/GenBank/DDBJ databases">
        <title>Shen-Dan is a novel receptor for embryonic stem cells and developing neurons.</title>
        <authorList>
            <person name="Wong Y.-H."/>
            <person name="Chang C."/>
            <person name="Chen P.-H."/>
            <person name="Yu J.-Y."/>
            <person name="Wang Y.-C."/>
            <person name="Lee C.-M."/>
            <person name="Lin W.-J."/>
            <person name="Tsai T.-F."/>
            <person name="Wang A.-G."/>
            <person name="Fann M.-J."/>
        </authorList>
    </citation>
    <scope>NUCLEOTIDE SEQUENCE [MRNA]</scope>
</reference>
<reference evidence="7 9" key="2">
    <citation type="journal article" date="2004" name="Nat. Genet.">
        <title>Complete sequencing and characterization of 21,243 full-length human cDNAs.</title>
        <authorList>
            <person name="Ota T."/>
            <person name="Suzuki Y."/>
            <person name="Nishikawa T."/>
            <person name="Otsuki T."/>
            <person name="Sugiyama T."/>
            <person name="Irie R."/>
            <person name="Wakamatsu A."/>
            <person name="Hayashi K."/>
            <person name="Sato H."/>
            <person name="Nagai K."/>
            <person name="Kimura K."/>
            <person name="Makita H."/>
            <person name="Sekine M."/>
            <person name="Obayashi M."/>
            <person name="Nishi T."/>
            <person name="Shibahara T."/>
            <person name="Tanaka T."/>
            <person name="Ishii S."/>
            <person name="Yamamoto J."/>
            <person name="Saito K."/>
            <person name="Kawai Y."/>
            <person name="Isono Y."/>
            <person name="Nakamura Y."/>
            <person name="Nagahari K."/>
            <person name="Murakami K."/>
            <person name="Yasuda T."/>
            <person name="Iwayanagi T."/>
            <person name="Wagatsuma M."/>
            <person name="Shiratori A."/>
            <person name="Sudo H."/>
            <person name="Hosoiri T."/>
            <person name="Kaku Y."/>
            <person name="Kodaira H."/>
            <person name="Kondo H."/>
            <person name="Sugawara M."/>
            <person name="Takahashi M."/>
            <person name="Kanda K."/>
            <person name="Yokoi T."/>
            <person name="Furuya T."/>
            <person name="Kikkawa E."/>
            <person name="Omura Y."/>
            <person name="Abe K."/>
            <person name="Kamihara K."/>
            <person name="Katsuta N."/>
            <person name="Sato K."/>
            <person name="Tanikawa M."/>
            <person name="Yamazaki M."/>
            <person name="Ninomiya K."/>
            <person name="Ishibashi T."/>
            <person name="Yamashita H."/>
            <person name="Murakawa K."/>
            <person name="Fujimori K."/>
            <person name="Tanai H."/>
            <person name="Kimata M."/>
            <person name="Watanabe M."/>
            <person name="Hiraoka S."/>
            <person name="Chiba Y."/>
            <person name="Ishida S."/>
            <person name="Ono Y."/>
            <person name="Takiguchi S."/>
            <person name="Watanabe S."/>
            <person name="Yosida M."/>
            <person name="Hotuta T."/>
            <person name="Kusano J."/>
            <person name="Kanehori K."/>
            <person name="Takahashi-Fujii A."/>
            <person name="Hara H."/>
            <person name="Tanase T.-O."/>
            <person name="Nomura Y."/>
            <person name="Togiya S."/>
            <person name="Komai F."/>
            <person name="Hara R."/>
            <person name="Takeuchi K."/>
            <person name="Arita M."/>
            <person name="Imose N."/>
            <person name="Musashino K."/>
            <person name="Yuuki H."/>
            <person name="Oshima A."/>
            <person name="Sasaki N."/>
            <person name="Aotsuka S."/>
            <person name="Yoshikawa Y."/>
            <person name="Matsunawa H."/>
            <person name="Ichihara T."/>
            <person name="Shiohata N."/>
            <person name="Sano S."/>
            <person name="Moriya S."/>
            <person name="Momiyama H."/>
            <person name="Satoh N."/>
            <person name="Takami S."/>
            <person name="Terashima Y."/>
            <person name="Suzuki O."/>
            <person name="Nakagawa S."/>
            <person name="Senoh A."/>
            <person name="Mizoguchi H."/>
            <person name="Goto Y."/>
            <person name="Shimizu F."/>
            <person name="Wakebe H."/>
            <person name="Hishigaki H."/>
            <person name="Watanabe T."/>
            <person name="Sugiyama A."/>
            <person name="Takemoto M."/>
            <person name="Kawakami B."/>
            <person name="Yamazaki M."/>
            <person name="Watanabe K."/>
            <person name="Kumagai A."/>
            <person name="Itakura S."/>
            <person name="Fukuzumi Y."/>
            <person name="Fujimori Y."/>
            <person name="Komiyama M."/>
            <person name="Tashiro H."/>
            <person name="Tanigami A."/>
            <person name="Fujiwara T."/>
            <person name="Ono T."/>
            <person name="Yamada K."/>
            <person name="Fujii Y."/>
            <person name="Ozaki K."/>
            <person name="Hirao M."/>
            <person name="Ohmori Y."/>
            <person name="Kawabata A."/>
            <person name="Hikiji T."/>
            <person name="Kobatake N."/>
            <person name="Inagaki H."/>
            <person name="Ikema Y."/>
            <person name="Okamoto S."/>
            <person name="Okitani R."/>
            <person name="Kawakami T."/>
            <person name="Noguchi S."/>
            <person name="Itoh T."/>
            <person name="Shigeta K."/>
            <person name="Senba T."/>
            <person name="Matsumura K."/>
            <person name="Nakajima Y."/>
            <person name="Mizuno T."/>
            <person name="Morinaga M."/>
            <person name="Sasaki M."/>
            <person name="Togashi T."/>
            <person name="Oyama M."/>
            <person name="Hata H."/>
            <person name="Watanabe M."/>
            <person name="Komatsu T."/>
            <person name="Mizushima-Sugano J."/>
            <person name="Satoh T."/>
            <person name="Shirai Y."/>
            <person name="Takahashi Y."/>
            <person name="Nakagawa K."/>
            <person name="Okumura K."/>
            <person name="Nagase T."/>
            <person name="Nomura N."/>
            <person name="Kikuchi H."/>
            <person name="Masuho Y."/>
            <person name="Yamashita R."/>
            <person name="Nakai K."/>
            <person name="Yada T."/>
            <person name="Nakamura Y."/>
            <person name="Ohara O."/>
            <person name="Isogai T."/>
            <person name="Sugano S."/>
        </authorList>
    </citation>
    <scope>NUCLEOTIDE SEQUENCE [LARGE SCALE MRNA] OF 603-1150</scope>
    <scope>VARIANT LEU-1062</scope>
    <source>
        <tissue evidence="9">Testis</tissue>
    </source>
</reference>
<comment type="function">
    <text evidence="1">May play a role in anteroposterior axis elongation.</text>
</comment>
<comment type="subcellular location">
    <subcellularLocation>
        <location evidence="2">Membrane</location>
        <topology evidence="2">Single-pass membrane protein</topology>
    </subcellularLocation>
</comment>
<comment type="similarity">
    <text evidence="2">Belongs to the immunoglobulin superfamily. DCC family.</text>
</comment>
<comment type="sequence caution" evidence="7">
    <conflict type="erroneous initiation">
        <sequence resource="EMBL-CDS" id="BAC05355"/>
    </conflict>
</comment>
<gene>
    <name evidence="10" type="primary">PRTG</name>
</gene>
<protein>
    <recommendedName>
        <fullName>Protogenin</fullName>
    </recommendedName>
    <alternativeName>
        <fullName>Protein Shen-Dan</fullName>
    </alternativeName>
</protein>
<evidence type="ECO:0000250" key="1">
    <source>
        <dbReference type="UniProtKB" id="Q2EY15"/>
    </source>
</evidence>
<evidence type="ECO:0000255" key="2"/>
<evidence type="ECO:0000255" key="3">
    <source>
        <dbReference type="PROSITE-ProRule" id="PRU00114"/>
    </source>
</evidence>
<evidence type="ECO:0000255" key="4">
    <source>
        <dbReference type="PROSITE-ProRule" id="PRU00316"/>
    </source>
</evidence>
<evidence type="ECO:0000256" key="5">
    <source>
        <dbReference type="SAM" id="MobiDB-lite"/>
    </source>
</evidence>
<evidence type="ECO:0000269" key="6">
    <source>
    </source>
</evidence>
<evidence type="ECO:0000305" key="7"/>
<evidence type="ECO:0000312" key="8">
    <source>
        <dbReference type="EMBL" id="AAU05741.1"/>
    </source>
</evidence>
<evidence type="ECO:0000312" key="9">
    <source>
        <dbReference type="EMBL" id="BAC05355.1"/>
    </source>
</evidence>
<evidence type="ECO:0000312" key="10">
    <source>
        <dbReference type="HGNC" id="HGNC:26373"/>
    </source>
</evidence>
<organism>
    <name type="scientific">Homo sapiens</name>
    <name type="common">Human</name>
    <dbReference type="NCBI Taxonomy" id="9606"/>
    <lineage>
        <taxon>Eukaryota</taxon>
        <taxon>Metazoa</taxon>
        <taxon>Chordata</taxon>
        <taxon>Craniata</taxon>
        <taxon>Vertebrata</taxon>
        <taxon>Euteleostomi</taxon>
        <taxon>Mammalia</taxon>
        <taxon>Eutheria</taxon>
        <taxon>Euarchontoglires</taxon>
        <taxon>Primates</taxon>
        <taxon>Haplorrhini</taxon>
        <taxon>Catarrhini</taxon>
        <taxon>Hominidae</taxon>
        <taxon>Homo</taxon>
    </lineage>
</organism>
<keyword id="KW-0217">Developmental protein</keyword>
<keyword id="KW-1015">Disulfide bond</keyword>
<keyword id="KW-0325">Glycoprotein</keyword>
<keyword id="KW-0393">Immunoglobulin domain</keyword>
<keyword id="KW-0472">Membrane</keyword>
<keyword id="KW-1267">Proteomics identification</keyword>
<keyword id="KW-1185">Reference proteome</keyword>
<keyword id="KW-0677">Repeat</keyword>
<keyword id="KW-0732">Signal</keyword>
<keyword id="KW-0812">Transmembrane</keyword>
<keyword id="KW-1133">Transmembrane helix</keyword>
<proteinExistence type="evidence at protein level"/>
<sequence length="1150" mass="127076">MAPPLRPLARLRPPGMLLRALLLLLLLSPLPGVWCFSELSFVKEPQDVTVTRKDPVVLDCQAHGEVPIKVTWLKNGAKMSENKRIEVLSNGSLYISEVEGRRGEQSDEGFYQCLAMNKYGAILSQKAHLALSTISAFEVQPISTEVHEGGVARFACKISSHPPAVITWEFNRTTLPMTMDRITALPTGVLQIYDVSQRDSGNYRCIAATVAHRRKSMEASLTVIPAKESKSFHTPTIIAGPQNITTSLHQTVVLECMATGNPKPIISWSRLDHKSIDVFNTRVLGNGNLMISDVRLQHAGVYVCRATTPGTRNFTVAMATLTVLAPPSFVEWPESLTRPRAGTARFVCQAEGIPSPKMSWLKNGRKIHSNGRIKMYNSKLVINQIIPEDDAIYQCMAENSQGSILSRARLTVVMSEDRPSAPYNVHAETMSSSAILLAWERPLYNSDKVIAYSVHYMKAEGLNNEEYQVVIGNDTTHYIIDDLEPASNYTFYIVAYMPMGASQMSDHVTQNTLEDVPLRPPEISLTSRSPTDILISWLPIPAKYRRGQVVLYRLSFRLSTENSIQVLELPGTTHEYLLEGLKPDSVYLVRITAATRVGLGESSVWTSHRTPKATSVKAPKSPELHLEPLNCTTISVRWQQDVEDTAAIQGYKLYYKEEGQQENGPIFLDTKDLLYTLSGLDPRRKYHVRLLAYNNIDDGYQADQTVSTPGCVSVRDRMVPPPPPPHHLYAKANTSSSIFLHWRRPAFTAAQIINYTIRCNPVGLQNASLVLYLQTSETHMLVQGLEPNTKYEFAVRLHVDQLSSPWSPVVYHSTLPEAPAGPPVGVKVTLIEDDTALVSWKPPDGPETVVTRYTILYASRKAWIAGEWQVLHREGAITMALLENLVAGNVYIVKISASNEVGEGPFSNSVELAVLPKETSESNQRPKRLDSADAKVYSGYYHLDQKSMTGIAVGVGIALTCILICVLILIYRSKARKSSASKTAQNGTQQLPRTSASLASGNEVGKNLEGAVGNEESLMPMIMPNSFIDAKGGTDLIINSYGPIIKNNSKKKWFFFQDSKKIQVEQPQRRFTPAVCFYQPGTTVLISDEDSPSSPGQTTSFSRPFGVAADTEHSANSEGSHETGDSGRFSHESNDEIHLSSVISTTPPNL</sequence>
<name>PRTG_HUMAN</name>
<accession>Q2VWP7</accession>
<accession>Q8N7D8</accession>
<feature type="signal peptide" evidence="2">
    <location>
        <begin position="1"/>
        <end position="35"/>
    </location>
</feature>
<feature type="chain" id="PRO_0000317047" description="Protogenin" evidence="2">
    <location>
        <begin position="36"/>
        <end position="1150"/>
    </location>
</feature>
<feature type="topological domain" description="Extracellular" evidence="2">
    <location>
        <begin position="36"/>
        <end position="949"/>
    </location>
</feature>
<feature type="transmembrane region" description="Helical" evidence="2">
    <location>
        <begin position="950"/>
        <end position="970"/>
    </location>
</feature>
<feature type="topological domain" description="Cytoplasmic" evidence="2">
    <location>
        <begin position="971"/>
        <end position="1150"/>
    </location>
</feature>
<feature type="domain" description="Ig-like 1" evidence="2">
    <location>
        <begin position="36"/>
        <end position="130"/>
    </location>
</feature>
<feature type="domain" description="Ig-like 2" evidence="2">
    <location>
        <begin position="135"/>
        <end position="222"/>
    </location>
</feature>
<feature type="domain" description="Ig-like 3" evidence="2">
    <location>
        <begin position="235"/>
        <end position="322"/>
    </location>
</feature>
<feature type="domain" description="Ig-like 4" evidence="2">
    <location>
        <begin position="327"/>
        <end position="411"/>
    </location>
</feature>
<feature type="domain" description="Fibronectin type-III 1" evidence="4">
    <location>
        <begin position="421"/>
        <end position="515"/>
    </location>
</feature>
<feature type="domain" description="Fibronectin type-III 2" evidence="4">
    <location>
        <begin position="517"/>
        <end position="613"/>
    </location>
</feature>
<feature type="domain" description="Fibronectin type-III 3" evidence="4">
    <location>
        <begin position="618"/>
        <end position="717"/>
    </location>
</feature>
<feature type="domain" description="Fibronectin type-III 4" evidence="4">
    <location>
        <begin position="724"/>
        <end position="817"/>
    </location>
</feature>
<feature type="domain" description="Fibronectin type-III 5" evidence="4">
    <location>
        <begin position="822"/>
        <end position="917"/>
    </location>
</feature>
<feature type="region of interest" description="Disordered" evidence="5">
    <location>
        <begin position="981"/>
        <end position="1002"/>
    </location>
</feature>
<feature type="region of interest" description="Disordered" evidence="5">
    <location>
        <begin position="1086"/>
        <end position="1150"/>
    </location>
</feature>
<feature type="compositionally biased region" description="Polar residues" evidence="5">
    <location>
        <begin position="983"/>
        <end position="1000"/>
    </location>
</feature>
<feature type="compositionally biased region" description="Polar residues" evidence="5">
    <location>
        <begin position="1092"/>
        <end position="1102"/>
    </location>
</feature>
<feature type="compositionally biased region" description="Basic and acidic residues" evidence="5">
    <location>
        <begin position="1110"/>
        <end position="1138"/>
    </location>
</feature>
<feature type="compositionally biased region" description="Polar residues" evidence="5">
    <location>
        <begin position="1141"/>
        <end position="1150"/>
    </location>
</feature>
<feature type="glycosylation site" description="N-linked (GlcNAc...) asparagine" evidence="2">
    <location>
        <position position="90"/>
    </location>
</feature>
<feature type="glycosylation site" description="N-linked (GlcNAc...) asparagine" evidence="2">
    <location>
        <position position="488"/>
    </location>
</feature>
<feature type="glycosylation site" description="N-linked (GlcNAc...) asparagine" evidence="2">
    <location>
        <position position="630"/>
    </location>
</feature>
<feature type="disulfide bond" evidence="3">
    <location>
        <begin position="60"/>
        <end position="113"/>
    </location>
</feature>
<feature type="disulfide bond" evidence="3">
    <location>
        <begin position="156"/>
        <end position="205"/>
    </location>
</feature>
<feature type="disulfide bond" evidence="3">
    <location>
        <begin position="256"/>
        <end position="304"/>
    </location>
</feature>
<feature type="disulfide bond" evidence="3">
    <location>
        <begin position="348"/>
        <end position="395"/>
    </location>
</feature>
<feature type="sequence variant" id="VAR_049916" description="In dbSNP:rs16976466.">
    <original>T</original>
    <variation>A</variation>
    <location>
        <position position="236"/>
    </location>
</feature>
<feature type="sequence variant" id="VAR_049917" description="In dbSNP:rs10518816.">
    <original>V</original>
    <variation>L</variation>
    <location>
        <position position="826"/>
    </location>
</feature>
<feature type="sequence variant" id="VAR_038467" description="In dbSNP:rs1438914." evidence="6">
    <original>I</original>
    <variation>L</variation>
    <location>
        <position position="1062"/>
    </location>
</feature>
<dbReference type="EMBL" id="AY630258">
    <property type="protein sequence ID" value="AAU05741.1"/>
    <property type="molecule type" value="mRNA"/>
</dbReference>
<dbReference type="EMBL" id="AK098622">
    <property type="protein sequence ID" value="BAC05355.1"/>
    <property type="status" value="ALT_INIT"/>
    <property type="molecule type" value="mRNA"/>
</dbReference>
<dbReference type="CCDS" id="CCDS42040.1"/>
<dbReference type="RefSeq" id="NP_776175.2">
    <property type="nucleotide sequence ID" value="NM_173814.5"/>
</dbReference>
<dbReference type="SMR" id="Q2VWP7"/>
<dbReference type="BioGRID" id="129634">
    <property type="interactions" value="10"/>
</dbReference>
<dbReference type="FunCoup" id="Q2VWP7">
    <property type="interactions" value="347"/>
</dbReference>
<dbReference type="IntAct" id="Q2VWP7">
    <property type="interactions" value="9"/>
</dbReference>
<dbReference type="MINT" id="Q2VWP7"/>
<dbReference type="STRING" id="9606.ENSP00000373937"/>
<dbReference type="GlyCosmos" id="Q2VWP7">
    <property type="glycosylation" value="4 sites, 1 glycan"/>
</dbReference>
<dbReference type="GlyGen" id="Q2VWP7">
    <property type="glycosylation" value="7 sites, 3 N-linked glycans (4 sites), 1 O-linked glycan (1 site)"/>
</dbReference>
<dbReference type="iPTMnet" id="Q2VWP7"/>
<dbReference type="PhosphoSitePlus" id="Q2VWP7"/>
<dbReference type="BioMuta" id="PRTG"/>
<dbReference type="DMDM" id="121946850"/>
<dbReference type="jPOST" id="Q2VWP7"/>
<dbReference type="MassIVE" id="Q2VWP7"/>
<dbReference type="PaxDb" id="9606-ENSP00000373937"/>
<dbReference type="PeptideAtlas" id="Q2VWP7"/>
<dbReference type="ProteomicsDB" id="61526"/>
<dbReference type="Antibodypedia" id="52034">
    <property type="antibodies" value="71 antibodies from 12 providers"/>
</dbReference>
<dbReference type="DNASU" id="283659"/>
<dbReference type="Ensembl" id="ENST00000389286.9">
    <property type="protein sequence ID" value="ENSP00000373937.4"/>
    <property type="gene ID" value="ENSG00000166450.13"/>
</dbReference>
<dbReference type="GeneID" id="283659"/>
<dbReference type="KEGG" id="hsa:283659"/>
<dbReference type="MANE-Select" id="ENST00000389286.9">
    <property type="protein sequence ID" value="ENSP00000373937.4"/>
    <property type="RefSeq nucleotide sequence ID" value="NM_173814.6"/>
    <property type="RefSeq protein sequence ID" value="NP_776175.2"/>
</dbReference>
<dbReference type="UCSC" id="uc002adg.4">
    <property type="organism name" value="human"/>
</dbReference>
<dbReference type="AGR" id="HGNC:26373"/>
<dbReference type="CTD" id="283659"/>
<dbReference type="DisGeNET" id="283659"/>
<dbReference type="GeneCards" id="PRTG"/>
<dbReference type="HGNC" id="HGNC:26373">
    <property type="gene designation" value="PRTG"/>
</dbReference>
<dbReference type="HPA" id="ENSG00000166450">
    <property type="expression patterns" value="Tissue enhanced (retina, thyroid gland)"/>
</dbReference>
<dbReference type="MIM" id="613261">
    <property type="type" value="gene"/>
</dbReference>
<dbReference type="neXtProt" id="NX_Q2VWP7"/>
<dbReference type="OpenTargets" id="ENSG00000166450"/>
<dbReference type="PharmGKB" id="PA142671124"/>
<dbReference type="VEuPathDB" id="HostDB:ENSG00000166450"/>
<dbReference type="eggNOG" id="KOG4221">
    <property type="taxonomic scope" value="Eukaryota"/>
</dbReference>
<dbReference type="GeneTree" id="ENSGT00940000155943"/>
<dbReference type="HOGENOM" id="CLU_006906_1_0_1"/>
<dbReference type="InParanoid" id="Q2VWP7"/>
<dbReference type="OMA" id="AAQIINY"/>
<dbReference type="OrthoDB" id="438268at2759"/>
<dbReference type="PAN-GO" id="Q2VWP7">
    <property type="GO annotations" value="0 GO annotations based on evolutionary models"/>
</dbReference>
<dbReference type="PhylomeDB" id="Q2VWP7"/>
<dbReference type="TreeFam" id="TF321506"/>
<dbReference type="PathwayCommons" id="Q2VWP7"/>
<dbReference type="SignaLink" id="Q2VWP7"/>
<dbReference type="BioGRID-ORCS" id="283659">
    <property type="hits" value="14 hits in 1148 CRISPR screens"/>
</dbReference>
<dbReference type="ChiTaRS" id="PRTG">
    <property type="organism name" value="human"/>
</dbReference>
<dbReference type="GenomeRNAi" id="283659"/>
<dbReference type="Pharos" id="Q2VWP7">
    <property type="development level" value="Tbio"/>
</dbReference>
<dbReference type="PRO" id="PR:Q2VWP7"/>
<dbReference type="Proteomes" id="UP000005640">
    <property type="component" value="Chromosome 15"/>
</dbReference>
<dbReference type="RNAct" id="Q2VWP7">
    <property type="molecule type" value="protein"/>
</dbReference>
<dbReference type="Bgee" id="ENSG00000166450">
    <property type="expression patterns" value="Expressed in buccal mucosa cell and 141 other cell types or tissues"/>
</dbReference>
<dbReference type="ExpressionAtlas" id="Q2VWP7">
    <property type="expression patterns" value="baseline and differential"/>
</dbReference>
<dbReference type="GO" id="GO:0005615">
    <property type="term" value="C:extracellular space"/>
    <property type="evidence" value="ECO:0007005"/>
    <property type="project" value="UniProtKB"/>
</dbReference>
<dbReference type="GO" id="GO:0005886">
    <property type="term" value="C:plasma membrane"/>
    <property type="evidence" value="ECO:0007669"/>
    <property type="project" value="Ensembl"/>
</dbReference>
<dbReference type="GO" id="GO:0042802">
    <property type="term" value="F:identical protein binding"/>
    <property type="evidence" value="ECO:0007669"/>
    <property type="project" value="Ensembl"/>
</dbReference>
<dbReference type="GO" id="GO:0038023">
    <property type="term" value="F:signaling receptor activity"/>
    <property type="evidence" value="ECO:0007669"/>
    <property type="project" value="Ensembl"/>
</dbReference>
<dbReference type="GO" id="GO:0098609">
    <property type="term" value="P:cell-cell adhesion"/>
    <property type="evidence" value="ECO:0000318"/>
    <property type="project" value="GO_Central"/>
</dbReference>
<dbReference type="GO" id="GO:0050768">
    <property type="term" value="P:negative regulation of neurogenesis"/>
    <property type="evidence" value="ECO:0007669"/>
    <property type="project" value="Ensembl"/>
</dbReference>
<dbReference type="CDD" id="cd00063">
    <property type="entry name" value="FN3"/>
    <property type="match status" value="5"/>
</dbReference>
<dbReference type="CDD" id="cd00096">
    <property type="entry name" value="Ig"/>
    <property type="match status" value="1"/>
</dbReference>
<dbReference type="FunFam" id="2.60.40.10:FF:000600">
    <property type="entry name" value="Contactin 2"/>
    <property type="match status" value="1"/>
</dbReference>
<dbReference type="FunFam" id="2.60.40.10:FF:000577">
    <property type="entry name" value="immunoglobulin superfamily DCC subclass member 3"/>
    <property type="match status" value="1"/>
</dbReference>
<dbReference type="FunFam" id="2.60.40.10:FF:000930">
    <property type="entry name" value="immunoglobulin superfamily DCC subclass member 3"/>
    <property type="match status" value="1"/>
</dbReference>
<dbReference type="FunFam" id="2.60.40.10:FF:000828">
    <property type="entry name" value="Protogenin"/>
    <property type="match status" value="1"/>
</dbReference>
<dbReference type="FunFam" id="2.60.40.10:FF:000987">
    <property type="entry name" value="Protogenin"/>
    <property type="match status" value="1"/>
</dbReference>
<dbReference type="FunFam" id="2.60.40.10:FF:000455">
    <property type="entry name" value="Protogenin A"/>
    <property type="match status" value="1"/>
</dbReference>
<dbReference type="FunFam" id="2.60.40.10:FF:000551">
    <property type="entry name" value="Protogenin A"/>
    <property type="match status" value="1"/>
</dbReference>
<dbReference type="FunFam" id="2.60.40.10:FF:000299">
    <property type="entry name" value="protogenin isoform X2"/>
    <property type="match status" value="1"/>
</dbReference>
<dbReference type="FunFam" id="2.60.40.10:FF:000456">
    <property type="entry name" value="protogenin isoform X2"/>
    <property type="match status" value="1"/>
</dbReference>
<dbReference type="Gene3D" id="2.60.40.10">
    <property type="entry name" value="Immunoglobulins"/>
    <property type="match status" value="9"/>
</dbReference>
<dbReference type="InterPro" id="IPR003961">
    <property type="entry name" value="FN3_dom"/>
</dbReference>
<dbReference type="InterPro" id="IPR036116">
    <property type="entry name" value="FN3_sf"/>
</dbReference>
<dbReference type="InterPro" id="IPR007110">
    <property type="entry name" value="Ig-like_dom"/>
</dbReference>
<dbReference type="InterPro" id="IPR036179">
    <property type="entry name" value="Ig-like_dom_sf"/>
</dbReference>
<dbReference type="InterPro" id="IPR013783">
    <property type="entry name" value="Ig-like_fold"/>
</dbReference>
<dbReference type="InterPro" id="IPR013098">
    <property type="entry name" value="Ig_I-set"/>
</dbReference>
<dbReference type="InterPro" id="IPR003599">
    <property type="entry name" value="Ig_sub"/>
</dbReference>
<dbReference type="InterPro" id="IPR003598">
    <property type="entry name" value="Ig_sub2"/>
</dbReference>
<dbReference type="PANTHER" id="PTHR44170">
    <property type="entry name" value="PROTEIN SIDEKICK"/>
    <property type="match status" value="1"/>
</dbReference>
<dbReference type="PANTHER" id="PTHR44170:SF47">
    <property type="entry name" value="PROTOGENIN"/>
    <property type="match status" value="1"/>
</dbReference>
<dbReference type="Pfam" id="PF00041">
    <property type="entry name" value="fn3"/>
    <property type="match status" value="5"/>
</dbReference>
<dbReference type="Pfam" id="PF07679">
    <property type="entry name" value="I-set"/>
    <property type="match status" value="2"/>
</dbReference>
<dbReference type="Pfam" id="PF13927">
    <property type="entry name" value="Ig_3"/>
    <property type="match status" value="2"/>
</dbReference>
<dbReference type="PRINTS" id="PR00014">
    <property type="entry name" value="FNTYPEIII"/>
</dbReference>
<dbReference type="SMART" id="SM00060">
    <property type="entry name" value="FN3"/>
    <property type="match status" value="5"/>
</dbReference>
<dbReference type="SMART" id="SM00409">
    <property type="entry name" value="IG"/>
    <property type="match status" value="4"/>
</dbReference>
<dbReference type="SMART" id="SM00408">
    <property type="entry name" value="IGc2"/>
    <property type="match status" value="4"/>
</dbReference>
<dbReference type="SUPFAM" id="SSF49265">
    <property type="entry name" value="Fibronectin type III"/>
    <property type="match status" value="3"/>
</dbReference>
<dbReference type="SUPFAM" id="SSF48726">
    <property type="entry name" value="Immunoglobulin"/>
    <property type="match status" value="4"/>
</dbReference>
<dbReference type="PROSITE" id="PS50853">
    <property type="entry name" value="FN3"/>
    <property type="match status" value="5"/>
</dbReference>
<dbReference type="PROSITE" id="PS50835">
    <property type="entry name" value="IG_LIKE"/>
    <property type="match status" value="4"/>
</dbReference>